<proteinExistence type="evidence at transcript level"/>
<dbReference type="EMBL" id="X97800">
    <property type="protein sequence ID" value="CAA66387.1"/>
    <property type="molecule type" value="mRNA"/>
</dbReference>
<dbReference type="RefSeq" id="NP_001274728.1">
    <property type="nucleotide sequence ID" value="NM_001287799.1"/>
</dbReference>
<dbReference type="SMR" id="Q25189"/>
<dbReference type="EnsemblMetazoa" id="NM_001287799.1">
    <property type="protein sequence ID" value="NP_001274728.1"/>
    <property type="gene ID" value="LOC100197367"/>
</dbReference>
<dbReference type="GeneID" id="100197367"/>
<dbReference type="KEGG" id="hmg:100197367"/>
<dbReference type="OMA" id="AQVPYCV"/>
<dbReference type="OrthoDB" id="7875889at2759"/>
<dbReference type="Proteomes" id="UP000694840">
    <property type="component" value="Unplaced"/>
</dbReference>
<dbReference type="GO" id="GO:1990904">
    <property type="term" value="C:ribonucleoprotein complex"/>
    <property type="evidence" value="ECO:0007669"/>
    <property type="project" value="UniProtKB-KW"/>
</dbReference>
<dbReference type="GO" id="GO:0005840">
    <property type="term" value="C:ribosome"/>
    <property type="evidence" value="ECO:0007669"/>
    <property type="project" value="UniProtKB-KW"/>
</dbReference>
<dbReference type="GO" id="GO:0043022">
    <property type="term" value="F:ribosome binding"/>
    <property type="evidence" value="ECO:0007669"/>
    <property type="project" value="InterPro"/>
</dbReference>
<dbReference type="GO" id="GO:0045182">
    <property type="term" value="F:translation regulator activity"/>
    <property type="evidence" value="ECO:0007669"/>
    <property type="project" value="InterPro"/>
</dbReference>
<dbReference type="CDD" id="cd00200">
    <property type="entry name" value="WD40"/>
    <property type="match status" value="1"/>
</dbReference>
<dbReference type="FunFam" id="2.130.10.10:FF:000615">
    <property type="entry name" value="Receptor for activated C kinase 1"/>
    <property type="match status" value="1"/>
</dbReference>
<dbReference type="Gene3D" id="2.130.10.10">
    <property type="entry name" value="YVTN repeat-like/Quinoprotein amine dehydrogenase"/>
    <property type="match status" value="1"/>
</dbReference>
<dbReference type="InterPro" id="IPR020472">
    <property type="entry name" value="G-protein_beta_WD-40_rep"/>
</dbReference>
<dbReference type="InterPro" id="IPR045223">
    <property type="entry name" value="RACK1-like"/>
</dbReference>
<dbReference type="InterPro" id="IPR015943">
    <property type="entry name" value="WD40/YVTN_repeat-like_dom_sf"/>
</dbReference>
<dbReference type="InterPro" id="IPR019775">
    <property type="entry name" value="WD40_repeat_CS"/>
</dbReference>
<dbReference type="InterPro" id="IPR036322">
    <property type="entry name" value="WD40_repeat_dom_sf"/>
</dbReference>
<dbReference type="InterPro" id="IPR001680">
    <property type="entry name" value="WD40_rpt"/>
</dbReference>
<dbReference type="PANTHER" id="PTHR19868">
    <property type="entry name" value="RECEPTOR FOR ACTIVATED PROTEIN KINASE C RACK1"/>
    <property type="match status" value="1"/>
</dbReference>
<dbReference type="Pfam" id="PF00400">
    <property type="entry name" value="WD40"/>
    <property type="match status" value="7"/>
</dbReference>
<dbReference type="PRINTS" id="PR00320">
    <property type="entry name" value="GPROTEINBRPT"/>
</dbReference>
<dbReference type="SMART" id="SM00320">
    <property type="entry name" value="WD40"/>
    <property type="match status" value="7"/>
</dbReference>
<dbReference type="SUPFAM" id="SSF50978">
    <property type="entry name" value="WD40 repeat-like"/>
    <property type="match status" value="1"/>
</dbReference>
<dbReference type="PROSITE" id="PS00678">
    <property type="entry name" value="WD_REPEATS_1"/>
    <property type="match status" value="4"/>
</dbReference>
<dbReference type="PROSITE" id="PS50082">
    <property type="entry name" value="WD_REPEATS_2"/>
    <property type="match status" value="6"/>
</dbReference>
<dbReference type="PROSITE" id="PS50294">
    <property type="entry name" value="WD_REPEATS_REGION"/>
    <property type="match status" value="1"/>
</dbReference>
<evidence type="ECO:0000305" key="1"/>
<gene>
    <name type="primary">RACK1</name>
</gene>
<accession>Q25189</accession>
<feature type="chain" id="PRO_0000127741" description="Small ribosomal subunit protein RACK1">
    <location>
        <begin position="1"/>
        <end position="317"/>
    </location>
</feature>
<feature type="repeat" description="WD 1">
    <location>
        <begin position="3"/>
        <end position="45"/>
    </location>
</feature>
<feature type="repeat" description="WD 2">
    <location>
        <begin position="52"/>
        <end position="93"/>
    </location>
</feature>
<feature type="repeat" description="WD 3">
    <location>
        <begin position="94"/>
        <end position="135"/>
    </location>
</feature>
<feature type="repeat" description="WD 4">
    <location>
        <begin position="137"/>
        <end position="180"/>
    </location>
</feature>
<feature type="repeat" description="WD 5">
    <location>
        <begin position="181"/>
        <end position="221"/>
    </location>
</feature>
<feature type="repeat" description="WD 6">
    <location>
        <begin position="222"/>
        <end position="262"/>
    </location>
</feature>
<feature type="repeat" description="WD 7">
    <location>
        <begin position="263"/>
        <end position="313"/>
    </location>
</feature>
<reference key="1">
    <citation type="submission" date="1996-05" db="EMBL/GenBank/DDBJ databases">
        <authorList>
            <person name="Hassel M.E."/>
        </authorList>
    </citation>
    <scope>NUCLEOTIDE SEQUENCE [MRNA]</scope>
    <source>
        <strain>Zurich</strain>
    </source>
</reference>
<comment type="similarity">
    <text evidence="1">Belongs to the WD repeat G protein beta family. Ribosomal protein RACK1 subfamily.</text>
</comment>
<protein>
    <recommendedName>
        <fullName evidence="1">Small ribosomal subunit protein RACK1</fullName>
    </recommendedName>
    <alternativeName>
        <fullName>Guanine nucleotide-binding protein subunit beta-like protein</fullName>
    </alternativeName>
    <alternativeName>
        <fullName>Receptor of activated protein kinase C</fullName>
        <shortName>RACK</shortName>
    </alternativeName>
</protein>
<keyword id="KW-1185">Reference proteome</keyword>
<keyword id="KW-0677">Repeat</keyword>
<keyword id="KW-0687">Ribonucleoprotein</keyword>
<keyword id="KW-0689">Ribosomal protein</keyword>
<keyword id="KW-0853">WD repeat</keyword>
<sequence length="317" mass="35256">MEQMTLRGTLKGHNGWVTQIATTPQNPDLILSASRDKTLIQWQLTRDDQTNYGFPKKCLTGHNHFVSDVVLSSDGQFALSCSWDKTLRLWDLNQGITTKQFVGHTKDVLSVAFSADNRQIVSGSRDNTIKLWNTLGQCKYTIQDESHSEWVSCVRFSPNTQNPIIVSCGWDKMVKVWNLTNCKLKTNHFGHTGYLNAVTVSPDGSLCASGGKDGNAMLWDLNEGKHLYTLDGGNVINALCFSPNRYWLCAATGPMIKIWDLEMKSVVDELKPGVIGISTKSRAADCISLAWSADGQTLFAGYTDNLIRVWQVTRSSQ</sequence>
<organism>
    <name type="scientific">Hydra vulgaris</name>
    <name type="common">Hydra</name>
    <name type="synonym">Hydra attenuata</name>
    <dbReference type="NCBI Taxonomy" id="6087"/>
    <lineage>
        <taxon>Eukaryota</taxon>
        <taxon>Metazoa</taxon>
        <taxon>Cnidaria</taxon>
        <taxon>Hydrozoa</taxon>
        <taxon>Hydroidolina</taxon>
        <taxon>Anthoathecata</taxon>
        <taxon>Aplanulata</taxon>
        <taxon>Hydridae</taxon>
        <taxon>Hydra</taxon>
    </lineage>
</organism>
<name>GBLP_HYDVU</name>